<keyword id="KW-0963">Cytoplasm</keyword>
<keyword id="KW-0496">Mitochondrion</keyword>
<keyword id="KW-0539">Nucleus</keyword>
<keyword id="KW-1185">Reference proteome</keyword>
<keyword id="KW-0808">Transferase</keyword>
<feature type="chain" id="PRO_0000185910" description="Glutathione S-transferase P 1">
    <location>
        <begin position="1"/>
        <end position="212"/>
    </location>
</feature>
<feature type="domain" description="GST N-terminal">
    <location>
        <begin position="2"/>
        <end position="83"/>
    </location>
</feature>
<feature type="domain" description="GST C-terminal">
    <location>
        <begin position="85"/>
        <end position="206"/>
    </location>
</feature>
<feature type="binding site" evidence="2">
    <location>
        <position position="8"/>
    </location>
    <ligand>
        <name>glutathione</name>
        <dbReference type="ChEBI" id="CHEBI:57925"/>
    </ligand>
</feature>
<feature type="binding site" evidence="2">
    <location>
        <position position="14"/>
    </location>
    <ligand>
        <name>glutathione</name>
        <dbReference type="ChEBI" id="CHEBI:57925"/>
    </ligand>
</feature>
<feature type="binding site" evidence="2">
    <location>
        <position position="39"/>
    </location>
    <ligand>
        <name>glutathione</name>
        <dbReference type="ChEBI" id="CHEBI:57925"/>
    </ligand>
</feature>
<feature type="binding site" evidence="2">
    <location>
        <position position="47"/>
    </location>
    <ligand>
        <name>glutathione</name>
        <dbReference type="ChEBI" id="CHEBI:57925"/>
    </ligand>
</feature>
<feature type="binding site" evidence="2">
    <location>
        <begin position="54"/>
        <end position="55"/>
    </location>
    <ligand>
        <name>glutathione</name>
        <dbReference type="ChEBI" id="CHEBI:57925"/>
    </ligand>
</feature>
<feature type="binding site" evidence="2">
    <location>
        <begin position="67"/>
        <end position="68"/>
    </location>
    <ligand>
        <name>glutathione</name>
        <dbReference type="ChEBI" id="CHEBI:57925"/>
    </ligand>
</feature>
<feature type="mutagenesis site" description="Reduction in activity and altered substrate specificity; inactive towards 4-nitroquinoline-1-oxide, active towards ethacrynic acid and tPBO." evidence="5">
    <original>F</original>
    <variation>Y</variation>
    <location>
        <position position="111"/>
    </location>
</feature>
<feature type="mutagenesis site" description="Reduction in activity." evidence="5">
    <original>P</original>
    <variation>G</variation>
    <variation>H</variation>
    <location>
        <position position="208"/>
    </location>
</feature>
<feature type="sequence conflict" description="In Ref. 2; AAH68854." evidence="7" ref="2">
    <original>K</original>
    <variation>R</variation>
    <location>
        <position position="203"/>
    </location>
</feature>
<proteinExistence type="evidence at protein level"/>
<sequence>MPGYVLTYFPVRGRAEPIRLLLADQGISWKEDEVQIPDWFSGKDARKKEAVFGQLPQFQDGDYVLYQSNSILRYLGNKHGLTGANDEERGHIDMVNDGVEDLRQKYGRLIFFEYETGKDKYLKELPSQLDFFERILSKNANGSKFVVGQKISFADYNLLDILQCHLDLCSKSLSAYPLLTAYVERLVARPKISEYLKSDARNKRPITPKHKK</sequence>
<accession>Q8JFZ2</accession>
<accession>Q6NTV0</accession>
<organism>
    <name type="scientific">Xenopus laevis</name>
    <name type="common">African clawed frog</name>
    <dbReference type="NCBI Taxonomy" id="8355"/>
    <lineage>
        <taxon>Eukaryota</taxon>
        <taxon>Metazoa</taxon>
        <taxon>Chordata</taxon>
        <taxon>Craniata</taxon>
        <taxon>Vertebrata</taxon>
        <taxon>Euteleostomi</taxon>
        <taxon>Amphibia</taxon>
        <taxon>Batrachia</taxon>
        <taxon>Anura</taxon>
        <taxon>Pipoidea</taxon>
        <taxon>Pipidae</taxon>
        <taxon>Xenopodinae</taxon>
        <taxon>Xenopus</taxon>
        <taxon>Xenopus</taxon>
    </lineage>
</organism>
<dbReference type="EC" id="2.5.1.18" evidence="2"/>
<dbReference type="EMBL" id="AJ489617">
    <property type="protein sequence ID" value="CAD33920.1"/>
    <property type="molecule type" value="mRNA"/>
</dbReference>
<dbReference type="EMBL" id="BC068854">
    <property type="protein sequence ID" value="AAH68854.1"/>
    <property type="molecule type" value="mRNA"/>
</dbReference>
<dbReference type="RefSeq" id="NP_001082252.1">
    <property type="nucleotide sequence ID" value="NM_001088783.1"/>
</dbReference>
<dbReference type="SMR" id="Q8JFZ2"/>
<dbReference type="GeneID" id="398321"/>
<dbReference type="KEGG" id="xla:398321"/>
<dbReference type="AGR" id="Xenbase:XB-GENE-5846294"/>
<dbReference type="CTD" id="398321"/>
<dbReference type="Xenbase" id="XB-GENE-5846294">
    <property type="gene designation" value="gstp1.L"/>
</dbReference>
<dbReference type="OrthoDB" id="4951845at2759"/>
<dbReference type="Proteomes" id="UP000186698">
    <property type="component" value="Chromosome 3L"/>
</dbReference>
<dbReference type="Bgee" id="398321">
    <property type="expression patterns" value="Expressed in zone of skin and 12 other cell types or tissues"/>
</dbReference>
<dbReference type="GO" id="GO:0005829">
    <property type="term" value="C:cytosol"/>
    <property type="evidence" value="ECO:0000318"/>
    <property type="project" value="GO_Central"/>
</dbReference>
<dbReference type="GO" id="GO:0005739">
    <property type="term" value="C:mitochondrion"/>
    <property type="evidence" value="ECO:0007669"/>
    <property type="project" value="UniProtKB-SubCell"/>
</dbReference>
<dbReference type="GO" id="GO:0005634">
    <property type="term" value="C:nucleus"/>
    <property type="evidence" value="ECO:0007669"/>
    <property type="project" value="UniProtKB-SubCell"/>
</dbReference>
<dbReference type="GO" id="GO:0004364">
    <property type="term" value="F:glutathione transferase activity"/>
    <property type="evidence" value="ECO:0000314"/>
    <property type="project" value="UniProtKB"/>
</dbReference>
<dbReference type="GO" id="GO:0006749">
    <property type="term" value="P:glutathione metabolic process"/>
    <property type="evidence" value="ECO:0000314"/>
    <property type="project" value="UniProtKB"/>
</dbReference>
<dbReference type="GO" id="GO:0030901">
    <property type="term" value="P:midbrain development"/>
    <property type="evidence" value="ECO:0000314"/>
    <property type="project" value="Xenbase"/>
</dbReference>
<dbReference type="GO" id="GO:0061351">
    <property type="term" value="P:neural precursor cell proliferation"/>
    <property type="evidence" value="ECO:0000315"/>
    <property type="project" value="Xenbase"/>
</dbReference>
<dbReference type="GO" id="GO:0030182">
    <property type="term" value="P:neuron differentiation"/>
    <property type="evidence" value="ECO:0000315"/>
    <property type="project" value="Xenbase"/>
</dbReference>
<dbReference type="CDD" id="cd03210">
    <property type="entry name" value="GST_C_Pi"/>
    <property type="match status" value="1"/>
</dbReference>
<dbReference type="CDD" id="cd03076">
    <property type="entry name" value="GST_N_Pi"/>
    <property type="match status" value="1"/>
</dbReference>
<dbReference type="FunFam" id="1.20.1050.10:FF:000020">
    <property type="entry name" value="Glutathione S-transferase P 1"/>
    <property type="match status" value="1"/>
</dbReference>
<dbReference type="Gene3D" id="1.20.1050.10">
    <property type="match status" value="1"/>
</dbReference>
<dbReference type="Gene3D" id="3.40.30.10">
    <property type="entry name" value="Glutaredoxin"/>
    <property type="match status" value="1"/>
</dbReference>
<dbReference type="InterPro" id="IPR010987">
    <property type="entry name" value="Glutathione-S-Trfase_C-like"/>
</dbReference>
<dbReference type="InterPro" id="IPR036282">
    <property type="entry name" value="Glutathione-S-Trfase_C_sf"/>
</dbReference>
<dbReference type="InterPro" id="IPR004045">
    <property type="entry name" value="Glutathione_S-Trfase_N"/>
</dbReference>
<dbReference type="InterPro" id="IPR004046">
    <property type="entry name" value="GST_C"/>
</dbReference>
<dbReference type="InterPro" id="IPR003082">
    <property type="entry name" value="GST_pi"/>
</dbReference>
<dbReference type="InterPro" id="IPR050213">
    <property type="entry name" value="GST_superfamily"/>
</dbReference>
<dbReference type="InterPro" id="IPR036249">
    <property type="entry name" value="Thioredoxin-like_sf"/>
</dbReference>
<dbReference type="PANTHER" id="PTHR11571">
    <property type="entry name" value="GLUTATHIONE S-TRANSFERASE"/>
    <property type="match status" value="1"/>
</dbReference>
<dbReference type="PANTHER" id="PTHR11571:SF265">
    <property type="entry name" value="GLUTATHIONE S-TRANSFERASE P 1"/>
    <property type="match status" value="1"/>
</dbReference>
<dbReference type="Pfam" id="PF14497">
    <property type="entry name" value="GST_C_3"/>
    <property type="match status" value="1"/>
</dbReference>
<dbReference type="Pfam" id="PF02798">
    <property type="entry name" value="GST_N"/>
    <property type="match status" value="1"/>
</dbReference>
<dbReference type="PRINTS" id="PR01268">
    <property type="entry name" value="GSTRNSFRASEP"/>
</dbReference>
<dbReference type="SFLD" id="SFLDG01205">
    <property type="entry name" value="AMPS.1"/>
    <property type="match status" value="1"/>
</dbReference>
<dbReference type="SFLD" id="SFLDG00363">
    <property type="entry name" value="AMPS_(cytGST):_Alpha-__Mu-__Pi"/>
    <property type="match status" value="1"/>
</dbReference>
<dbReference type="SUPFAM" id="SSF47616">
    <property type="entry name" value="GST C-terminal domain-like"/>
    <property type="match status" value="1"/>
</dbReference>
<dbReference type="SUPFAM" id="SSF52833">
    <property type="entry name" value="Thioredoxin-like"/>
    <property type="match status" value="1"/>
</dbReference>
<dbReference type="PROSITE" id="PS50405">
    <property type="entry name" value="GST_CTER"/>
    <property type="match status" value="1"/>
</dbReference>
<dbReference type="PROSITE" id="PS50404">
    <property type="entry name" value="GST_NTER"/>
    <property type="match status" value="1"/>
</dbReference>
<reference evidence="7 9" key="1">
    <citation type="journal article" date="2003" name="Biochem. J.">
        <title>A novel amphibian Pi-class glutathione transferase isoenzyme from Xenopus laevis: importance of phenylalanine 111 in the H-site.</title>
        <authorList>
            <person name="De Luca A."/>
            <person name="Favaloro B."/>
            <person name="Carletti E."/>
            <person name="Sacchetta P."/>
            <person name="Di Ilio C."/>
        </authorList>
    </citation>
    <scope>NUCLEOTIDE SEQUENCE [MRNA]</scope>
    <scope>ENZYME ACTIVITY</scope>
    <scope>TISSUE SPECIFICITY</scope>
    <scope>DEVELOPMENTAL STAGE</scope>
    <scope>MUTAGENESIS OF PHE-111 AND PRO-208</scope>
    <source>
        <tissue evidence="5">Liver tumor</tissue>
    </source>
</reference>
<reference evidence="7 8" key="2">
    <citation type="submission" date="2004-04" db="EMBL/GenBank/DDBJ databases">
        <authorList>
            <consortium name="NIH - Xenopus Gene Collection (XGC) project"/>
        </authorList>
    </citation>
    <scope>NUCLEOTIDE SEQUENCE [LARGE SCALE MRNA] OF 18-212</scope>
    <source>
        <tissue evidence="8">Embryo</tissue>
    </source>
</reference>
<comment type="function">
    <text evidence="5 6">Conjugation of reduced glutathione to a wide number of exogenous and endogenous hydrophobic electrophiles. Highly active towards 1-chloro-2,4-dinitrobenzene and organic isothiocyanates, but shows no detectable activity towards 1,2-dichloro-4-nitrobenzene, p-nitrobenzylchloride, trans-4-phenyl-3-buten-2-one (tPBO) and ethacrynic acid. May be associated with cellular proliferation.</text>
</comment>
<comment type="catalytic activity">
    <reaction evidence="5">
        <text>RX + glutathione = an S-substituted glutathione + a halide anion + H(+)</text>
        <dbReference type="Rhea" id="RHEA:16437"/>
        <dbReference type="ChEBI" id="CHEBI:15378"/>
        <dbReference type="ChEBI" id="CHEBI:16042"/>
        <dbReference type="ChEBI" id="CHEBI:17792"/>
        <dbReference type="ChEBI" id="CHEBI:57925"/>
        <dbReference type="ChEBI" id="CHEBI:90779"/>
        <dbReference type="EC" id="2.5.1.18"/>
    </reaction>
    <physiologicalReaction direction="left-to-right" evidence="7">
        <dbReference type="Rhea" id="RHEA:16438"/>
    </physiologicalReaction>
</comment>
<comment type="subunit">
    <text evidence="3">Homodimer.</text>
</comment>
<comment type="subcellular location">
    <subcellularLocation>
        <location evidence="1">Cytoplasm</location>
    </subcellularLocation>
    <subcellularLocation>
        <location evidence="1">Mitochondrion</location>
    </subcellularLocation>
    <subcellularLocation>
        <location evidence="1">Nucleus</location>
    </subcellularLocation>
    <text evidence="1">The 83 N-terminal amino acids function as un uncleaved transit peptide, and arginine residues within it are crucial for mitochondrial localization.</text>
</comment>
<comment type="tissue specificity">
    <text evidence="5">Expressed only in embryos. Not expressed in liver, lung, heart, kidney and ovary.</text>
</comment>
<comment type="developmental stage">
    <text evidence="5">Detected in embryos at stages 11-15, but not detected in unfertilized eggs.</text>
</comment>
<comment type="similarity">
    <text evidence="4">Belongs to the GST superfamily. Pi family.</text>
</comment>
<protein>
    <recommendedName>
        <fullName evidence="7">Glutathione S-transferase P 1</fullName>
        <ecNumber evidence="2">2.5.1.18</ecNumber>
    </recommendedName>
    <alternativeName>
        <fullName>GST class-pi</fullName>
        <shortName>GST-Pi</shortName>
    </alternativeName>
    <alternativeName>
        <fullName>XlGSTP1-1</fullName>
    </alternativeName>
</protein>
<gene>
    <name type="primary">gstp1</name>
</gene>
<evidence type="ECO:0000250" key="1"/>
<evidence type="ECO:0000250" key="2">
    <source>
        <dbReference type="UniProtKB" id="P09211"/>
    </source>
</evidence>
<evidence type="ECO:0000250" key="3">
    <source>
        <dbReference type="UniProtKB" id="P83325"/>
    </source>
</evidence>
<evidence type="ECO:0000255" key="4"/>
<evidence type="ECO:0000269" key="5">
    <source>
    </source>
</evidence>
<evidence type="ECO:0000303" key="6">
    <source>
    </source>
</evidence>
<evidence type="ECO:0000305" key="7"/>
<evidence type="ECO:0000312" key="8">
    <source>
        <dbReference type="EMBL" id="AAH68854.1"/>
    </source>
</evidence>
<evidence type="ECO:0000312" key="9">
    <source>
        <dbReference type="EMBL" id="CAD33920.1"/>
    </source>
</evidence>
<name>GSTP1_XENLA</name>